<feature type="peptide" id="PRO_0000461752" description="Cryptide Pep-17" evidence="1">
    <location>
        <begin position="1"/>
        <end position="10"/>
    </location>
</feature>
<feature type="modified residue" description="Serine amide" evidence="1">
    <location>
        <position position="10"/>
    </location>
</feature>
<reference key="1">
    <citation type="journal article" date="2018" name="J. Proteomics">
        <title>Profiling the short, linear, non-disulfide bond-containing peptidome from the venom of the scorpion Tityus obscurus.</title>
        <authorList>
            <person name="Dias N.B."/>
            <person name="de Souza B.M."/>
            <person name="Cocchi F.K."/>
            <person name="Chalkidis H.M."/>
            <person name="Dorce V.A.C."/>
            <person name="Palma M.S."/>
        </authorList>
    </citation>
    <scope>PROTEIN SEQUENCE</scope>
    <scope>IDENTIFICATION BY MASS SPECTROMETRY</scope>
    <scope>MASS SPECTROMETRY</scope>
    <scope>SUBCELLULAR LOCATION</scope>
    <scope>AMIDATION AT SER-10</scope>
    <source>
        <tissue>Venom</tissue>
    </source>
</reference>
<keyword id="KW-0027">Amidation</keyword>
<keyword id="KW-0903">Direct protein sequencing</keyword>
<keyword id="KW-0964">Secreted</keyword>
<proteinExistence type="evidence at protein level"/>
<evidence type="ECO:0000269" key="1">
    <source>
    </source>
</evidence>
<evidence type="ECO:0000303" key="2">
    <source>
    </source>
</evidence>
<evidence type="ECO:0000305" key="3">
    <source>
    </source>
</evidence>
<sequence>VTLTLPPAES</sequence>
<protein>
    <recommendedName>
        <fullName evidence="2">Cryptide Pep-17</fullName>
    </recommendedName>
</protein>
<comment type="subcellular location">
    <subcellularLocation>
        <location evidence="1">Secreted</location>
    </subcellularLocation>
</comment>
<comment type="tissue specificity">
    <text evidence="3">Expressed by the venom gland.</text>
</comment>
<comment type="mass spectrometry"/>
<accession>P0DRG2</accession>
<name>CRY17_TITOB</name>
<dbReference type="GO" id="GO:0005576">
    <property type="term" value="C:extracellular region"/>
    <property type="evidence" value="ECO:0007669"/>
    <property type="project" value="UniProtKB-SubCell"/>
</dbReference>
<organism>
    <name type="scientific">Tityus obscurus</name>
    <name type="common">Amazonian scorpion</name>
    <name type="synonym">Tityus cambridgei</name>
    <dbReference type="NCBI Taxonomy" id="1221240"/>
    <lineage>
        <taxon>Eukaryota</taxon>
        <taxon>Metazoa</taxon>
        <taxon>Ecdysozoa</taxon>
        <taxon>Arthropoda</taxon>
        <taxon>Chelicerata</taxon>
        <taxon>Arachnida</taxon>
        <taxon>Scorpiones</taxon>
        <taxon>Buthida</taxon>
        <taxon>Buthoidea</taxon>
        <taxon>Buthidae</taxon>
        <taxon>Tityus</taxon>
    </lineage>
</organism>